<proteinExistence type="evidence at protein level"/>
<gene>
    <name evidence="8" type="primary">aiiA</name>
</gene>
<comment type="function">
    <text evidence="4">Hydrolyzes acyl homoserine lactones with varying lengths of acyl chains, with a slight preference for substrates without 3-oxo substitution at the C3 position. Has only residual activity towards non-acyl lactones, and no activity towards non-cyclic esters.</text>
</comment>
<comment type="catalytic activity">
    <reaction evidence="2 3 4">
        <text>an N-acyl-L-homoserine lactone + H2O = an N-acyl-L-homoserine + H(+)</text>
        <dbReference type="Rhea" id="RHEA:22576"/>
        <dbReference type="ChEBI" id="CHEBI:15377"/>
        <dbReference type="ChEBI" id="CHEBI:15378"/>
        <dbReference type="ChEBI" id="CHEBI:55474"/>
        <dbReference type="ChEBI" id="CHEBI:58921"/>
        <dbReference type="EC" id="3.1.1.81"/>
    </reaction>
</comment>
<comment type="cofactor">
    <cofactor evidence="1">
        <name>Zn(2+)</name>
        <dbReference type="ChEBI" id="CHEBI:29105"/>
    </cofactor>
    <text evidence="1">Binds 2 Zn(2+) ions per subunit.</text>
</comment>
<comment type="activity regulation">
    <text evidence="4">Completely inhibited by Cu(2+) and Ag(+). Partially inhibited by Cr(2+), Pb(2+) and Fe(2+). Mg(2+), Ca(2+), Mn(2+), Co(2+), Ni(2+), Zn(2+) and Cd(2+) have no effect on activity. The chelating agents EDTA, 2,2'bipyridine and o-phenanthroline have no effect on enzyme activity.</text>
</comment>
<comment type="biophysicochemical properties">
    <kinetics>
        <KM evidence="4">4.07 mM for 3-oxo-C4-HSL</KM>
        <KM evidence="4">2.95 mM for 3-oxo-C6-HSL</KM>
        <KM evidence="4">2.28 mM for 3-oxo-C8-HSL</KM>
        <KM evidence="4">1.43 mM for 3-oxo-C10-HSL</KM>
        <KM evidence="4">5.11 mM for C4-HSL</KM>
        <KM evidence="4">3.83 mM for C6-HSL</KM>
        <KM evidence="4">2.61 mM for C8-HSL</KM>
        <KM evidence="4">7.51 mM for 3-HO-C4-HSL</KM>
    </kinetics>
    <phDependence>
        <text evidence="4">Optimum pH is 8.0 with 3-oxo-C8-HSL as substrate. Activity increases with increase in pH from 6.0 to 8.0, and declines slightly at pH 9.0. Little or no activity at pH 5.0 or below.</text>
    </phDependence>
    <temperatureDependence>
        <text evidence="4">Stable below 37 degrees Celsius, activity decreases sharply after incubation for 2 hours at 45 degrees Celsius.</text>
    </temperatureDependence>
</comment>
<comment type="subunit">
    <text evidence="1">Monomer.</text>
</comment>
<comment type="similarity">
    <text evidence="7">Belongs to the metallo-beta-lactamase superfamily.</text>
</comment>
<organism>
    <name type="scientific">Bacillus sp</name>
    <dbReference type="NCBI Taxonomy" id="1409"/>
    <lineage>
        <taxon>Bacteria</taxon>
        <taxon>Bacillati</taxon>
        <taxon>Bacillota</taxon>
        <taxon>Bacilli</taxon>
        <taxon>Bacillales</taxon>
        <taxon>Bacillaceae</taxon>
        <taxon>Bacillus</taxon>
    </lineage>
</organism>
<accession>Q9L8R8</accession>
<dbReference type="EC" id="3.1.1.81"/>
<dbReference type="EMBL" id="AF196486">
    <property type="protein sequence ID" value="AAF62398.1"/>
    <property type="molecule type" value="Genomic_DNA"/>
</dbReference>
<dbReference type="SMR" id="Q9L8R8"/>
<dbReference type="BioCyc" id="MetaCyc:MONOMER-14588"/>
<dbReference type="BRENDA" id="3.1.1.81">
    <property type="organism ID" value="691"/>
</dbReference>
<dbReference type="SABIO-RK" id="Q9L8R8"/>
<dbReference type="PHI-base" id="PHI:2340"/>
<dbReference type="PHI-base" id="PHI:9528"/>
<dbReference type="GO" id="GO:0102007">
    <property type="term" value="F:acyl-L-homoserine-lactone lactonohydrolase activity"/>
    <property type="evidence" value="ECO:0007669"/>
    <property type="project" value="UniProtKB-EC"/>
</dbReference>
<dbReference type="GO" id="GO:0046872">
    <property type="term" value="F:metal ion binding"/>
    <property type="evidence" value="ECO:0007669"/>
    <property type="project" value="UniProtKB-KW"/>
</dbReference>
<dbReference type="CDD" id="cd07729">
    <property type="entry name" value="AHL_lactonase_MBL-fold"/>
    <property type="match status" value="1"/>
</dbReference>
<dbReference type="FunFam" id="3.60.15.10:FF:000060">
    <property type="entry name" value="N-acyl homoserine lactonase AiiA"/>
    <property type="match status" value="1"/>
</dbReference>
<dbReference type="Gene3D" id="3.60.15.10">
    <property type="entry name" value="Ribonuclease Z/Hydroxyacylglutathione hydrolase-like"/>
    <property type="match status" value="1"/>
</dbReference>
<dbReference type="InterPro" id="IPR054870">
    <property type="entry name" value="AHLLactAiiA"/>
</dbReference>
<dbReference type="InterPro" id="IPR051013">
    <property type="entry name" value="MBL_superfamily_lactonases"/>
</dbReference>
<dbReference type="InterPro" id="IPR001279">
    <property type="entry name" value="Metallo-B-lactamas"/>
</dbReference>
<dbReference type="InterPro" id="IPR036866">
    <property type="entry name" value="RibonucZ/Hydroxyglut_hydro"/>
</dbReference>
<dbReference type="NCBIfam" id="NF045699">
    <property type="entry name" value="AHLLactAiiA"/>
    <property type="match status" value="1"/>
</dbReference>
<dbReference type="PANTHER" id="PTHR42978:SF7">
    <property type="entry name" value="METALLO-HYDROLASE RV2300C-RELATED"/>
    <property type="match status" value="1"/>
</dbReference>
<dbReference type="PANTHER" id="PTHR42978">
    <property type="entry name" value="QUORUM-QUENCHING LACTONASE YTNP-RELATED-RELATED"/>
    <property type="match status" value="1"/>
</dbReference>
<dbReference type="Pfam" id="PF00753">
    <property type="entry name" value="Lactamase_B"/>
    <property type="match status" value="1"/>
</dbReference>
<dbReference type="SMART" id="SM00849">
    <property type="entry name" value="Lactamase_B"/>
    <property type="match status" value="1"/>
</dbReference>
<dbReference type="SUPFAM" id="SSF56281">
    <property type="entry name" value="Metallo-hydrolase/oxidoreductase"/>
    <property type="match status" value="1"/>
</dbReference>
<reference evidence="7 8" key="1">
    <citation type="journal article" date="2000" name="Proc. Natl. Acad. Sci. U.S.A.">
        <title>AiiA, an enzyme that inactivates the acylhomoserine lactone quorum-sensing signal and attenuates the virulence of Erwinia carotovora.</title>
        <authorList>
            <person name="Dong Y.H."/>
            <person name="Xu J.L."/>
            <person name="Li X.Z."/>
            <person name="Zhang L.H."/>
        </authorList>
    </citation>
    <scope>NUCLEOTIDE SEQUENCE [GENOMIC DNA]</scope>
    <scope>CATALYTIC ACTIVITY</scope>
    <scope>MUTAGENESIS OF HIS-104; HIS-106; ASP-108; HIS-109 AND HIS-169</scope>
    <source>
        <strain evidence="8">240B1</strain>
    </source>
</reference>
<reference evidence="7" key="2">
    <citation type="journal article" date="2001" name="Nature">
        <title>Quenching quorum-sensing-dependent bacterial infection by an N-acyl homoserine lactonase.</title>
        <authorList>
            <person name="Dong Y.H."/>
            <person name="Wang L.H."/>
            <person name="Xu J.L."/>
            <person name="Zhang H.B."/>
            <person name="Zhang X.F."/>
            <person name="Zhang L.H."/>
        </authorList>
    </citation>
    <scope>CATALYTIC ACTIVITY</scope>
</reference>
<reference evidence="7" key="3">
    <citation type="journal article" date="2004" name="J. Biol. Chem.">
        <title>Specificity and enzyme kinetics of the quorum-quenching N-Acyl homoserine lactone lactonase (AHL-lactonase).</title>
        <authorList>
            <person name="Wang L.H."/>
            <person name="Weng L.X."/>
            <person name="Dong Y.H."/>
            <person name="Zhang L.H."/>
        </authorList>
    </citation>
    <scope>FUNCTION</scope>
    <scope>CATALYTIC ACTIVITY</scope>
    <scope>BIOPHYSICOCHEMICAL PROPERTIES</scope>
    <scope>ACTIVITY REGULATION</scope>
    <scope>MUTAGENESIS OF HIS-106; ASP-108; HIS-109 AND HIS-169</scope>
</reference>
<sequence length="250" mass="28037">MTVKKLYFVPAGRCMLDHSSVNSTLTPGELLDLPVWCYLLETEEGPILVDTGMPESAVNNEGLFNGTFVEGQVLPKMTEEDRIVNILKRVGYEPEDLLYIISSHLHFDHAGGNGAFINTPIIVQRAEYEAAQHSEEYLKECILPNLNYKIIEGDYEVVPGVQLLHTPGHTPGHQSLLIETEKSGPVLLTIDASYTKENFENEVPFAGFDSELALSSIKRLKEVVMKEKPIVFFGHDIEQERGCKVFPEYI</sequence>
<keyword id="KW-0378">Hydrolase</keyword>
<keyword id="KW-0479">Metal-binding</keyword>
<keyword id="KW-0862">Zinc</keyword>
<evidence type="ECO:0000250" key="1">
    <source>
        <dbReference type="UniProtKB" id="Q7B8B9"/>
    </source>
</evidence>
<evidence type="ECO:0000269" key="2">
    <source>
    </source>
</evidence>
<evidence type="ECO:0000269" key="3">
    <source>
    </source>
</evidence>
<evidence type="ECO:0000269" key="4">
    <source>
    </source>
</evidence>
<evidence type="ECO:0000303" key="5">
    <source>
    </source>
</evidence>
<evidence type="ECO:0000303" key="6">
    <source>
    </source>
</evidence>
<evidence type="ECO:0000305" key="7"/>
<evidence type="ECO:0000312" key="8">
    <source>
        <dbReference type="EMBL" id="AAF62398.1"/>
    </source>
</evidence>
<name>AHLL_BACSP</name>
<feature type="chain" id="PRO_0000403299" description="N-acyl homoserine lactonase">
    <location>
        <begin position="1"/>
        <end position="250"/>
    </location>
</feature>
<feature type="binding site" evidence="1">
    <location>
        <position position="104"/>
    </location>
    <ligand>
        <name>Zn(2+)</name>
        <dbReference type="ChEBI" id="CHEBI:29105"/>
        <label>1</label>
    </ligand>
</feature>
<feature type="binding site" evidence="1">
    <location>
        <position position="106"/>
    </location>
    <ligand>
        <name>Zn(2+)</name>
        <dbReference type="ChEBI" id="CHEBI:29105"/>
        <label>1</label>
    </ligand>
</feature>
<feature type="binding site" evidence="1">
    <location>
        <position position="108"/>
    </location>
    <ligand>
        <name>Zn(2+)</name>
        <dbReference type="ChEBI" id="CHEBI:29105"/>
        <label>2</label>
    </ligand>
</feature>
<feature type="binding site" evidence="1">
    <location>
        <position position="109"/>
    </location>
    <ligand>
        <name>Zn(2+)</name>
        <dbReference type="ChEBI" id="CHEBI:29105"/>
        <label>2</label>
    </ligand>
</feature>
<feature type="binding site" evidence="1">
    <location>
        <position position="169"/>
    </location>
    <ligand>
        <name>Zn(2+)</name>
        <dbReference type="ChEBI" id="CHEBI:29105"/>
        <label>1</label>
    </ligand>
</feature>
<feature type="binding site" evidence="1">
    <location>
        <position position="191"/>
    </location>
    <ligand>
        <name>Zn(2+)</name>
        <dbReference type="ChEBI" id="CHEBI:29105"/>
        <label>1</label>
    </ligand>
</feature>
<feature type="binding site" evidence="1">
    <location>
        <position position="191"/>
    </location>
    <ligand>
        <name>Zn(2+)</name>
        <dbReference type="ChEBI" id="CHEBI:29105"/>
        <label>2</label>
    </ligand>
</feature>
<feature type="binding site" evidence="1">
    <location>
        <position position="235"/>
    </location>
    <ligand>
        <name>Zn(2+)</name>
        <dbReference type="ChEBI" id="CHEBI:29105"/>
        <label>2</label>
    </ligand>
</feature>
<feature type="mutagenesis site" description="Reduces activity on N-beta-oxooctanoyl-L-homoserine lactone by 38.6%; when associated with L-106 and L-108. Reduces activity on N-beta-oxooctanoyl-L-homoserine lactone by 62.1%; when associated with L-106, L-108 and L-109." evidence="2">
    <original>H</original>
    <variation>L</variation>
    <location>
        <position position="104"/>
    </location>
</feature>
<feature type="mutagenesis site" description="No effect on activity on N-beta-oxooctanoyl-L-homoserine lactone. Reduces activity on N-beta-oxooctanoyl-L-homoserine lactone by 48.9%; when associated with S-106. Abolishes activity on N-beta-oxooctanoyl-L-homoserine lactone; when associated with S-106 and S-109. Abolishes activity on N-beta-oxooctanoyl-L-homoserine lactone; when associated with S-106, S-108 and S-109." evidence="2">
    <original>H</original>
    <variation>S</variation>
    <location>
        <position position="104"/>
    </location>
</feature>
<feature type="mutagenesis site" description="Reduces activity on N-beta-oxooctanoyl-L-homoserine lactone by 38.6%; when associated with L-104 and L-108. Reduces activity on N-beta-oxooctanoyl-L-homoserine lactone by 62.1%; when associated with L-104, L-108 and L-109." evidence="2 4">
    <original>H</original>
    <variation>L</variation>
    <location>
        <position position="106"/>
    </location>
</feature>
<feature type="mutagenesis site" description="Results in a conformational change. Reduces activity on N-beta-oxooctanoyl-L-homoserine lactone by 38.6%. Reduces activity on acyl homoserine lactone by 47% and decreases enzyme affinity. Reduces activity on N-beta-oxooctanoyl-L-homoserine lactone by 48.9%; when associated with S-104. Abolishes activity on N-beta-oxooctanoyl-L-homoserine lactone; when associated with S-104 and S-109. Abolishes activity on N-beta-oxooctanoyl-L-homoserine lactone; when associated with S-104, S-108 and S-109." evidence="2 4">
    <original>H</original>
    <variation>S</variation>
    <location>
        <position position="106"/>
    </location>
</feature>
<feature type="mutagenesis site" description="Reduces activity on N-beta-oxooctanoyl-L-homoserine lactone by 9.2%." evidence="2 4">
    <original>D</original>
    <variation>E</variation>
    <location>
        <position position="108"/>
    </location>
</feature>
<feature type="mutagenesis site" description="Reduces activity on N-beta-oxooctanoyl-L-homoserine lactone by 38.6%; when associated with L-104 and L-106. Reduces activity on N-beta-oxooctanoyl-L-homoserine lactone by 62.1%; when associated with L-104, L-106 and L-109." evidence="2 4">
    <original>D</original>
    <variation>L</variation>
    <location>
        <position position="108"/>
    </location>
</feature>
<feature type="mutagenesis site" description="Results in a conformational change. Abolishes activity on N-beta-oxooctanoyl-L-homoserine lactone and acyl homoserine lactone. Abolishes activity on N-beta-oxooctanoyl-L-homoserine lactone; when associated with S-109. Abolishes activity on N-beta-oxooctanoyl-L-homoserine lactone; when associated with S-104, S-106 and S-109." evidence="2 4">
    <original>D</original>
    <variation>S</variation>
    <location>
        <position position="108"/>
    </location>
</feature>
<feature type="mutagenesis site" description="Reduces activity on N-beta-oxooctanoyl-L-homoserine lactone by 62.1%; when associated with L-104, L-106 and L-108." evidence="2 4">
    <original>H</original>
    <variation>L</variation>
    <location>
        <position position="109"/>
    </location>
</feature>
<feature type="mutagenesis site" description="Results in a conformational change. Abolishes activity on N-beta-oxooctanoyl-L-homoserine lactone and acyl homoserine lactone. Abolishes activity on N-beta-oxooctanoyl-L-homoserine lactone; when associated with S-108. Abolishes activity on N-beta-oxooctanoyl-L-homoserine lactone; when associated with S-104 and S-106. Abolishes activity on N-beta-oxooctanoyl-L-homoserine lactone; when associated with S-104, S-106 and S-108." evidence="2 4">
    <original>H</original>
    <variation>S</variation>
    <location>
        <position position="109"/>
    </location>
</feature>
<feature type="mutagenesis site" description="Results in a conformational change. Reduces activity on N-beta-oxooctanoyl-L-homoserine lactone by 38.6%. Reduces activity on acyl homoserine lactone by 47% and decreases enzyme affinity." evidence="2 4">
    <original>H</original>
    <variation>S</variation>
    <location>
        <position position="169"/>
    </location>
</feature>
<protein>
    <recommendedName>
        <fullName evidence="1">N-acyl homoserine lactonase</fullName>
        <shortName evidence="5 6">AHL-lactonase</shortName>
        <shortName evidence="5">Acyl-homoserine lactonase</shortName>
        <ecNumber>3.1.1.81</ecNumber>
    </recommendedName>
</protein>